<sequence length="167" mass="17795">MIRLSLFISLLLTSVAVLADVQINIRGNVYIPPCTINNGQNIVVDFGNINPEHVDNSRGEVTKNISISCPYKSGSLWIKVTGNTMGVGQNNVLATNITHFGIALYQGKGMSTPLTLGNGSGNGYRVTAGLDTARSTFTFTSVPFRNGSGILNGGDFRTTASMSMIYN</sequence>
<proteinExistence type="evidence at protein level"/>
<gene>
    <name type="primary">prsF</name>
</gene>
<protein>
    <recommendedName>
        <fullName>Minor fimbrial protein PrsF</fullName>
    </recommendedName>
</protein>
<evidence type="ECO:0000255" key="1"/>
<dbReference type="EMBL" id="X62158">
    <property type="protein sequence ID" value="CAA44088.1"/>
    <property type="molecule type" value="Genomic_DNA"/>
</dbReference>
<dbReference type="PIR" id="S25211">
    <property type="entry name" value="S25211"/>
</dbReference>
<dbReference type="PDB" id="2W07">
    <property type="method" value="X-ray"/>
    <property type="resolution" value="2.20 A"/>
    <property type="chains" value="B=20-167"/>
</dbReference>
<dbReference type="PDB" id="7LHI">
    <property type="method" value="EM"/>
    <property type="resolution" value="7.60 A"/>
    <property type="chains" value="F=1-167"/>
</dbReference>
<dbReference type="PDBsum" id="2W07"/>
<dbReference type="PDBsum" id="7LHI"/>
<dbReference type="SMR" id="P42187"/>
<dbReference type="GO" id="GO:0005576">
    <property type="term" value="C:extracellular region"/>
    <property type="evidence" value="ECO:0007669"/>
    <property type="project" value="UniProtKB-SubCell"/>
</dbReference>
<dbReference type="GO" id="GO:0009289">
    <property type="term" value="C:pilus"/>
    <property type="evidence" value="ECO:0007669"/>
    <property type="project" value="UniProtKB-SubCell"/>
</dbReference>
<dbReference type="GO" id="GO:0043709">
    <property type="term" value="P:cell adhesion involved in single-species biofilm formation"/>
    <property type="evidence" value="ECO:0007669"/>
    <property type="project" value="TreeGrafter"/>
</dbReference>
<dbReference type="Gene3D" id="2.60.40.1090">
    <property type="entry name" value="Fimbrial-type adhesion domain"/>
    <property type="match status" value="1"/>
</dbReference>
<dbReference type="InterPro" id="IPR000259">
    <property type="entry name" value="Adhesion_dom_fimbrial"/>
</dbReference>
<dbReference type="InterPro" id="IPR036937">
    <property type="entry name" value="Adhesion_dom_fimbrial_sf"/>
</dbReference>
<dbReference type="InterPro" id="IPR008966">
    <property type="entry name" value="Adhesion_dom_sf"/>
</dbReference>
<dbReference type="InterPro" id="IPR050263">
    <property type="entry name" value="Bact_Fimbrial_Adh_Pro"/>
</dbReference>
<dbReference type="InterPro" id="IPR005430">
    <property type="entry name" value="P_pili_tip_PapF"/>
</dbReference>
<dbReference type="PANTHER" id="PTHR33420:SF26">
    <property type="entry name" value="FIMBRIAL SUBUNIT"/>
    <property type="match status" value="1"/>
</dbReference>
<dbReference type="PANTHER" id="PTHR33420">
    <property type="entry name" value="FIMBRIAL SUBUNIT ELFA-RELATED"/>
    <property type="match status" value="1"/>
</dbReference>
<dbReference type="Pfam" id="PF00419">
    <property type="entry name" value="Fimbrial"/>
    <property type="match status" value="1"/>
</dbReference>
<dbReference type="PRINTS" id="PR01613">
    <property type="entry name" value="FIMBRIALPAPF"/>
</dbReference>
<dbReference type="SUPFAM" id="SSF49401">
    <property type="entry name" value="Bacterial adhesins"/>
    <property type="match status" value="1"/>
</dbReference>
<feature type="signal peptide" evidence="1">
    <location>
        <begin position="1"/>
        <end position="18"/>
    </location>
</feature>
<feature type="chain" id="PRO_0000022154" description="Minor fimbrial protein PrsF">
    <location>
        <begin position="19"/>
        <end position="167"/>
    </location>
</feature>
<accession>P42187</accession>
<keyword id="KW-0002">3D-structure</keyword>
<keyword id="KW-0130">Cell adhesion</keyword>
<keyword id="KW-0281">Fimbrium</keyword>
<keyword id="KW-0964">Secreted</keyword>
<keyword id="KW-0732">Signal</keyword>
<comment type="function">
    <text>Fimbriae (also called pili), polar filaments radiating from the surface of the bacterium to a length of 0.5-1.5 micrometers and numbering 100-300 per cell, enable bacteria to colonize the epithelium of specific host organs.</text>
</comment>
<comment type="subcellular location">
    <subcellularLocation>
        <location>Secreted</location>
    </subcellularLocation>
    <subcellularLocation>
        <location>Fimbrium</location>
    </subcellularLocation>
    <text>At the tip of the pili.</text>
</comment>
<organism>
    <name type="scientific">Escherichia coli</name>
    <dbReference type="NCBI Taxonomy" id="562"/>
    <lineage>
        <taxon>Bacteria</taxon>
        <taxon>Pseudomonadati</taxon>
        <taxon>Pseudomonadota</taxon>
        <taxon>Gammaproteobacteria</taxon>
        <taxon>Enterobacterales</taxon>
        <taxon>Enterobacteriaceae</taxon>
        <taxon>Escherichia</taxon>
    </lineage>
</organism>
<name>PRSF_ECOLX</name>
<reference key="1">
    <citation type="journal article" date="1992" name="Mol. Microbiol.">
        <title>Horizontal gene transfer of the Escherichia coli pap and prs pili operons as a mechanism for the development of tissue-specific adhesive properties.</title>
        <authorList>
            <person name="Marklund B.-I."/>
            <person name="Tennent J.M."/>
            <person name="Garcia E."/>
            <person name="Hamers A."/>
            <person name="Baga M."/>
            <person name="Lindberg F."/>
            <person name="Gaastra W."/>
            <person name="Normark S."/>
        </authorList>
    </citation>
    <scope>NUCLEOTIDE SEQUENCE [GENOMIC DNA]</scope>
    <source>
        <strain>1442</strain>
    </source>
</reference>